<accession>Q731P1</accession>
<reference key="1">
    <citation type="journal article" date="2004" name="Nucleic Acids Res.">
        <title>The genome sequence of Bacillus cereus ATCC 10987 reveals metabolic adaptations and a large plasmid related to Bacillus anthracis pXO1.</title>
        <authorList>
            <person name="Rasko D.A."/>
            <person name="Ravel J."/>
            <person name="Oekstad O.A."/>
            <person name="Helgason E."/>
            <person name="Cer R.Z."/>
            <person name="Jiang L."/>
            <person name="Shores K.A."/>
            <person name="Fouts D.E."/>
            <person name="Tourasse N.J."/>
            <person name="Angiuoli S.V."/>
            <person name="Kolonay J.F."/>
            <person name="Nelson W.C."/>
            <person name="Kolstoe A.-B."/>
            <person name="Fraser C.M."/>
            <person name="Read T.D."/>
        </authorList>
    </citation>
    <scope>NUCLEOTIDE SEQUENCE [LARGE SCALE GENOMIC DNA]</scope>
    <source>
        <strain>ATCC 10987 / NRS 248</strain>
    </source>
</reference>
<keyword id="KW-0131">Cell cycle</keyword>
<keyword id="KW-0132">Cell division</keyword>
<keyword id="KW-0159">Chromosome partition</keyword>
<keyword id="KW-0963">Cytoplasm</keyword>
<name>SCPB_BACC1</name>
<protein>
    <recommendedName>
        <fullName evidence="1">Segregation and condensation protein B</fullName>
    </recommendedName>
</protein>
<organism>
    <name type="scientific">Bacillus cereus (strain ATCC 10987 / NRS 248)</name>
    <dbReference type="NCBI Taxonomy" id="222523"/>
    <lineage>
        <taxon>Bacteria</taxon>
        <taxon>Bacillati</taxon>
        <taxon>Bacillota</taxon>
        <taxon>Bacilli</taxon>
        <taxon>Bacillales</taxon>
        <taxon>Bacillaceae</taxon>
        <taxon>Bacillus</taxon>
        <taxon>Bacillus cereus group</taxon>
    </lineage>
</organism>
<sequence>MDRTEQKSIIEGLLFVSGDEGISPEQIAKVLEIEGNEVIDILEEMQKECEGAHRGLQIVQYAKVYRFATKKEHASYYQKLIDIPTAASLSQAALETLAIVAYRQPITRTEMEEIRGVKTDKALQTLVSHLLIKEMGRAEGPGRPILYGTTKEFLDTFGLKTLDDLPPLSEENEQMNEADLFFGSLQEISK</sequence>
<gene>
    <name evidence="1" type="primary">scpB</name>
    <name type="ordered locus">BCE_4124</name>
</gene>
<feature type="chain" id="PRO_0000211123" description="Segregation and condensation protein B">
    <location>
        <begin position="1"/>
        <end position="190"/>
    </location>
</feature>
<evidence type="ECO:0000255" key="1">
    <source>
        <dbReference type="HAMAP-Rule" id="MF_01804"/>
    </source>
</evidence>
<dbReference type="EMBL" id="AE017194">
    <property type="protein sequence ID" value="AAS43026.1"/>
    <property type="molecule type" value="Genomic_DNA"/>
</dbReference>
<dbReference type="SMR" id="Q731P1"/>
<dbReference type="KEGG" id="bca:BCE_4124"/>
<dbReference type="HOGENOM" id="CLU_045647_5_3_9"/>
<dbReference type="Proteomes" id="UP000002527">
    <property type="component" value="Chromosome"/>
</dbReference>
<dbReference type="GO" id="GO:0005737">
    <property type="term" value="C:cytoplasm"/>
    <property type="evidence" value="ECO:0007669"/>
    <property type="project" value="UniProtKB-SubCell"/>
</dbReference>
<dbReference type="GO" id="GO:0051301">
    <property type="term" value="P:cell division"/>
    <property type="evidence" value="ECO:0007669"/>
    <property type="project" value="UniProtKB-KW"/>
</dbReference>
<dbReference type="GO" id="GO:0051304">
    <property type="term" value="P:chromosome separation"/>
    <property type="evidence" value="ECO:0007669"/>
    <property type="project" value="InterPro"/>
</dbReference>
<dbReference type="GO" id="GO:0006260">
    <property type="term" value="P:DNA replication"/>
    <property type="evidence" value="ECO:0007669"/>
    <property type="project" value="UniProtKB-UniRule"/>
</dbReference>
<dbReference type="Gene3D" id="1.10.10.10">
    <property type="entry name" value="Winged helix-like DNA-binding domain superfamily/Winged helix DNA-binding domain"/>
    <property type="match status" value="2"/>
</dbReference>
<dbReference type="HAMAP" id="MF_01804">
    <property type="entry name" value="ScpB"/>
    <property type="match status" value="1"/>
</dbReference>
<dbReference type="InterPro" id="IPR005234">
    <property type="entry name" value="ScpB_csome_segregation"/>
</dbReference>
<dbReference type="InterPro" id="IPR036388">
    <property type="entry name" value="WH-like_DNA-bd_sf"/>
</dbReference>
<dbReference type="InterPro" id="IPR036390">
    <property type="entry name" value="WH_DNA-bd_sf"/>
</dbReference>
<dbReference type="NCBIfam" id="TIGR00281">
    <property type="entry name" value="SMC-Scp complex subunit ScpB"/>
    <property type="match status" value="1"/>
</dbReference>
<dbReference type="PANTHER" id="PTHR34298">
    <property type="entry name" value="SEGREGATION AND CONDENSATION PROTEIN B"/>
    <property type="match status" value="1"/>
</dbReference>
<dbReference type="PANTHER" id="PTHR34298:SF2">
    <property type="entry name" value="SEGREGATION AND CONDENSATION PROTEIN B"/>
    <property type="match status" value="1"/>
</dbReference>
<dbReference type="Pfam" id="PF04079">
    <property type="entry name" value="SMC_ScpB"/>
    <property type="match status" value="1"/>
</dbReference>
<dbReference type="PIRSF" id="PIRSF019345">
    <property type="entry name" value="ScpB"/>
    <property type="match status" value="1"/>
</dbReference>
<dbReference type="SUPFAM" id="SSF46785">
    <property type="entry name" value="Winged helix' DNA-binding domain"/>
    <property type="match status" value="2"/>
</dbReference>
<comment type="function">
    <text evidence="1">Participates in chromosomal partition during cell division. May act via the formation of a condensin-like complex containing Smc and ScpA that pull DNA away from mid-cell into both cell halves.</text>
</comment>
<comment type="subunit">
    <text evidence="1">Homodimer. Homodimerization may be required to stabilize the binding of ScpA to the Smc head domains. Component of a cohesin-like complex composed of ScpA, ScpB and the Smc homodimer, in which ScpA and ScpB bind to the head domain of Smc. The presence of the three proteins is required for the association of the complex with DNA.</text>
</comment>
<comment type="subcellular location">
    <subcellularLocation>
        <location evidence="1">Cytoplasm</location>
    </subcellularLocation>
    <text evidence="1">Associated with two foci at the outer edges of the nucleoid region in young cells, and at four foci within both cell halves in older cells.</text>
</comment>
<comment type="similarity">
    <text evidence="1">Belongs to the ScpB family.</text>
</comment>
<proteinExistence type="inferred from homology"/>